<organism>
    <name type="scientific">Pseudomonas syringae pv. syringae (strain B728a)</name>
    <dbReference type="NCBI Taxonomy" id="205918"/>
    <lineage>
        <taxon>Bacteria</taxon>
        <taxon>Pseudomonadati</taxon>
        <taxon>Pseudomonadota</taxon>
        <taxon>Gammaproteobacteria</taxon>
        <taxon>Pseudomonadales</taxon>
        <taxon>Pseudomonadaceae</taxon>
        <taxon>Pseudomonas</taxon>
        <taxon>Pseudomonas syringae</taxon>
    </lineage>
</organism>
<gene>
    <name evidence="1" type="primary">yidC</name>
    <name type="ordered locus">Psyr_5134</name>
</gene>
<reference key="1">
    <citation type="journal article" date="2005" name="Proc. Natl. Acad. Sci. U.S.A.">
        <title>Comparison of the complete genome sequences of Pseudomonas syringae pv. syringae B728a and pv. tomato DC3000.</title>
        <authorList>
            <person name="Feil H."/>
            <person name="Feil W.S."/>
            <person name="Chain P."/>
            <person name="Larimer F."/>
            <person name="Dibartolo G."/>
            <person name="Copeland A."/>
            <person name="Lykidis A."/>
            <person name="Trong S."/>
            <person name="Nolan M."/>
            <person name="Goltsman E."/>
            <person name="Thiel J."/>
            <person name="Malfatti S."/>
            <person name="Loper J.E."/>
            <person name="Lapidus A."/>
            <person name="Detter J.C."/>
            <person name="Land M."/>
            <person name="Richardson P.M."/>
            <person name="Kyrpides N.C."/>
            <person name="Ivanova N."/>
            <person name="Lindow S.E."/>
        </authorList>
    </citation>
    <scope>NUCLEOTIDE SEQUENCE [LARGE SCALE GENOMIC DNA]</scope>
    <source>
        <strain>B728a</strain>
    </source>
</reference>
<sequence>MDIKRTILIVALAIVTYVGVLKWNQDYGQAAMPTQNVAASTTAPGIPDTAAGTNGSASADVPSANATANTAAAPLETPAVASKDLIHVKTDVLDLAIDPVGGDVVQLRLPLYPRRQDRPDVPFQLFDNGGERTFLAQSGLTGTNGPDARAAGRPVYTSTQKTYQLADGQDTMVVDLKFSENGVNYIKRFTFKRGLYDLVMTYVVDNQSAQPWSGNLFAQLKRDASSDPSSTTATGTATYLGAALWTAAEPYKKVSMKDIDKGQVKETVQGGWVAWLQHYFVTAWIPDHNATNAVQTRKDSQGNYIIGFTSPTLSVAPGAQGETSATLYAGPKSQAVLKELSPGLELTVDYGFLWFIAQPIFWLLQHIHAILGNWGWSIIVLTMLIKGLFFPLSAASYKSMARMRAVAPKLALLKEQHGDDRQKMSQAMMELYKKEKINPLGGCLPILVQMPVFLSLYWVLLESVEMRQAPWILWITDLSIKDPFFILPIIMGATMFIQQRLNPTPPDPMQAKVMKMMPIIFTFFFLWFPAGLVLYWVVNNTLSIAQQAYITRKIEAATKKAAV</sequence>
<protein>
    <recommendedName>
        <fullName evidence="1">Membrane protein insertase YidC</fullName>
    </recommendedName>
    <alternativeName>
        <fullName evidence="1">Foldase YidC</fullName>
    </alternativeName>
    <alternativeName>
        <fullName evidence="1">Membrane integrase YidC</fullName>
    </alternativeName>
    <alternativeName>
        <fullName evidence="1">Membrane protein YidC</fullName>
    </alternativeName>
</protein>
<keyword id="KW-0997">Cell inner membrane</keyword>
<keyword id="KW-1003">Cell membrane</keyword>
<keyword id="KW-0143">Chaperone</keyword>
<keyword id="KW-0472">Membrane</keyword>
<keyword id="KW-0653">Protein transport</keyword>
<keyword id="KW-0812">Transmembrane</keyword>
<keyword id="KW-1133">Transmembrane helix</keyword>
<keyword id="KW-0813">Transport</keyword>
<proteinExistence type="inferred from homology"/>
<feature type="chain" id="PRO_1000070145" description="Membrane protein insertase YidC">
    <location>
        <begin position="1"/>
        <end position="563"/>
    </location>
</feature>
<feature type="transmembrane region" description="Helical" evidence="1">
    <location>
        <begin position="1"/>
        <end position="21"/>
    </location>
</feature>
<feature type="transmembrane region" description="Helical" evidence="1">
    <location>
        <begin position="344"/>
        <end position="364"/>
    </location>
</feature>
<feature type="transmembrane region" description="Helical" evidence="1">
    <location>
        <begin position="370"/>
        <end position="390"/>
    </location>
</feature>
<feature type="transmembrane region" description="Helical" evidence="1">
    <location>
        <begin position="440"/>
        <end position="460"/>
    </location>
</feature>
<feature type="transmembrane region" description="Helical" evidence="1">
    <location>
        <begin position="471"/>
        <end position="491"/>
    </location>
</feature>
<feature type="transmembrane region" description="Helical" evidence="1">
    <location>
        <begin position="518"/>
        <end position="538"/>
    </location>
</feature>
<feature type="region of interest" description="Disordered" evidence="2">
    <location>
        <begin position="43"/>
        <end position="62"/>
    </location>
</feature>
<dbReference type="EMBL" id="CP000075">
    <property type="protein sequence ID" value="AAY40161.1"/>
    <property type="molecule type" value="Genomic_DNA"/>
</dbReference>
<dbReference type="RefSeq" id="WP_003401421.1">
    <property type="nucleotide sequence ID" value="NC_007005.1"/>
</dbReference>
<dbReference type="RefSeq" id="YP_238199.1">
    <property type="nucleotide sequence ID" value="NC_007005.1"/>
</dbReference>
<dbReference type="SMR" id="Q4ZL11"/>
<dbReference type="STRING" id="205918.Psyr_5134"/>
<dbReference type="KEGG" id="psb:Psyr_5134"/>
<dbReference type="PATRIC" id="fig|205918.7.peg.5295"/>
<dbReference type="eggNOG" id="COG0706">
    <property type="taxonomic scope" value="Bacteria"/>
</dbReference>
<dbReference type="HOGENOM" id="CLU_016535_3_0_6"/>
<dbReference type="OrthoDB" id="9780552at2"/>
<dbReference type="Proteomes" id="UP000000426">
    <property type="component" value="Chromosome"/>
</dbReference>
<dbReference type="GO" id="GO:0005886">
    <property type="term" value="C:plasma membrane"/>
    <property type="evidence" value="ECO:0007669"/>
    <property type="project" value="UniProtKB-SubCell"/>
</dbReference>
<dbReference type="GO" id="GO:0032977">
    <property type="term" value="F:membrane insertase activity"/>
    <property type="evidence" value="ECO:0007669"/>
    <property type="project" value="InterPro"/>
</dbReference>
<dbReference type="GO" id="GO:0051205">
    <property type="term" value="P:protein insertion into membrane"/>
    <property type="evidence" value="ECO:0007669"/>
    <property type="project" value="TreeGrafter"/>
</dbReference>
<dbReference type="GO" id="GO:0015031">
    <property type="term" value="P:protein transport"/>
    <property type="evidence" value="ECO:0007669"/>
    <property type="project" value="UniProtKB-KW"/>
</dbReference>
<dbReference type="CDD" id="cd20070">
    <property type="entry name" value="5TM_YidC_Alb3"/>
    <property type="match status" value="1"/>
</dbReference>
<dbReference type="CDD" id="cd19961">
    <property type="entry name" value="EcYidC-like_peri"/>
    <property type="match status" value="1"/>
</dbReference>
<dbReference type="Gene3D" id="2.70.98.90">
    <property type="match status" value="1"/>
</dbReference>
<dbReference type="HAMAP" id="MF_01810">
    <property type="entry name" value="YidC_type1"/>
    <property type="match status" value="1"/>
</dbReference>
<dbReference type="InterPro" id="IPR019998">
    <property type="entry name" value="Membr_insert_YidC"/>
</dbReference>
<dbReference type="InterPro" id="IPR028053">
    <property type="entry name" value="Membr_insert_YidC_N"/>
</dbReference>
<dbReference type="InterPro" id="IPR001708">
    <property type="entry name" value="YidC/ALB3/OXA1/COX18"/>
</dbReference>
<dbReference type="InterPro" id="IPR028055">
    <property type="entry name" value="YidC/Oxa/ALB_C"/>
</dbReference>
<dbReference type="InterPro" id="IPR047196">
    <property type="entry name" value="YidC_ALB_C"/>
</dbReference>
<dbReference type="InterPro" id="IPR038221">
    <property type="entry name" value="YidC_periplasmic_sf"/>
</dbReference>
<dbReference type="NCBIfam" id="NF002352">
    <property type="entry name" value="PRK01318.1-3"/>
    <property type="match status" value="1"/>
</dbReference>
<dbReference type="NCBIfam" id="NF002353">
    <property type="entry name" value="PRK01318.1-4"/>
    <property type="match status" value="1"/>
</dbReference>
<dbReference type="NCBIfam" id="TIGR03593">
    <property type="entry name" value="yidC_nterm"/>
    <property type="match status" value="1"/>
</dbReference>
<dbReference type="NCBIfam" id="TIGR03592">
    <property type="entry name" value="yidC_oxa1_cterm"/>
    <property type="match status" value="1"/>
</dbReference>
<dbReference type="PANTHER" id="PTHR12428:SF65">
    <property type="entry name" value="CYTOCHROME C OXIDASE ASSEMBLY PROTEIN COX18, MITOCHONDRIAL"/>
    <property type="match status" value="1"/>
</dbReference>
<dbReference type="PANTHER" id="PTHR12428">
    <property type="entry name" value="OXA1"/>
    <property type="match status" value="1"/>
</dbReference>
<dbReference type="Pfam" id="PF02096">
    <property type="entry name" value="60KD_IMP"/>
    <property type="match status" value="1"/>
</dbReference>
<dbReference type="Pfam" id="PF14849">
    <property type="entry name" value="YidC_periplas"/>
    <property type="match status" value="1"/>
</dbReference>
<dbReference type="PRINTS" id="PR00701">
    <property type="entry name" value="60KDINNERMP"/>
</dbReference>
<dbReference type="PRINTS" id="PR01900">
    <property type="entry name" value="YIDCPROTEIN"/>
</dbReference>
<accession>Q4ZL11</accession>
<name>YIDC_PSEU2</name>
<comment type="function">
    <text evidence="1">Required for the insertion and/or proper folding and/or complex formation of integral membrane proteins into the membrane. Involved in integration of membrane proteins that insert both dependently and independently of the Sec translocase complex, as well as at least some lipoproteins. Aids folding of multispanning membrane proteins.</text>
</comment>
<comment type="subunit">
    <text evidence="1">Interacts with the Sec translocase complex via SecD. Specifically interacts with transmembrane segments of nascent integral membrane proteins during membrane integration.</text>
</comment>
<comment type="subcellular location">
    <subcellularLocation>
        <location evidence="1">Cell inner membrane</location>
        <topology evidence="1">Multi-pass membrane protein</topology>
    </subcellularLocation>
</comment>
<comment type="similarity">
    <text evidence="1">Belongs to the OXA1/ALB3/YidC family. Type 1 subfamily.</text>
</comment>
<evidence type="ECO:0000255" key="1">
    <source>
        <dbReference type="HAMAP-Rule" id="MF_01810"/>
    </source>
</evidence>
<evidence type="ECO:0000256" key="2">
    <source>
        <dbReference type="SAM" id="MobiDB-lite"/>
    </source>
</evidence>